<comment type="similarity">
    <text evidence="1">Belongs to the eukaryotic ribosomal protein eS6 family.</text>
</comment>
<reference key="1">
    <citation type="journal article" date="2003" name="Mol. Microbiol.">
        <title>An integrated analysis of the genome of the hyperthermophilic archaeon Pyrococcus abyssi.</title>
        <authorList>
            <person name="Cohen G.N."/>
            <person name="Barbe V."/>
            <person name="Flament D."/>
            <person name="Galperin M."/>
            <person name="Heilig R."/>
            <person name="Lecompte O."/>
            <person name="Poch O."/>
            <person name="Prieur D."/>
            <person name="Querellou J."/>
            <person name="Ripp R."/>
            <person name="Thierry J.-C."/>
            <person name="Van der Oost J."/>
            <person name="Weissenbach J."/>
            <person name="Zivanovic Y."/>
            <person name="Forterre P."/>
        </authorList>
    </citation>
    <scope>NUCLEOTIDE SEQUENCE [LARGE SCALE GENOMIC DNA]</scope>
    <source>
        <strain>GE5 / Orsay</strain>
    </source>
</reference>
<reference key="2">
    <citation type="journal article" date="2012" name="Curr. Microbiol.">
        <title>Re-annotation of two hyperthermophilic archaea Pyrococcus abyssi GE5 and Pyrococcus furiosus DSM 3638.</title>
        <authorList>
            <person name="Gao J."/>
            <person name="Wang J."/>
        </authorList>
    </citation>
    <scope>GENOME REANNOTATION</scope>
    <source>
        <strain>GE5 / Orsay</strain>
    </source>
</reference>
<feature type="chain" id="PRO_0000137355" description="Small ribosomal subunit protein eS6">
    <location>
        <begin position="1"/>
        <end position="125"/>
    </location>
</feature>
<feature type="strand" evidence="4">
    <location>
        <begin position="3"/>
        <end position="9"/>
    </location>
</feature>
<feature type="turn" evidence="4">
    <location>
        <begin position="11"/>
        <end position="13"/>
    </location>
</feature>
<feature type="strand" evidence="4">
    <location>
        <begin position="16"/>
        <end position="23"/>
    </location>
</feature>
<feature type="helix" evidence="4">
    <location>
        <begin position="24"/>
        <end position="28"/>
    </location>
</feature>
<feature type="turn" evidence="4">
    <location>
        <begin position="29"/>
        <end position="31"/>
    </location>
</feature>
<feature type="strand" evidence="4">
    <location>
        <begin position="37"/>
        <end position="39"/>
    </location>
</feature>
<feature type="helix" evidence="4">
    <location>
        <begin position="40"/>
        <end position="43"/>
    </location>
</feature>
<feature type="helix" evidence="4">
    <location>
        <begin position="47"/>
        <end position="51"/>
    </location>
</feature>
<feature type="strand" evidence="4">
    <location>
        <begin position="60"/>
        <end position="68"/>
    </location>
</feature>
<feature type="strand" evidence="3">
    <location>
        <begin position="69"/>
        <end position="71"/>
    </location>
</feature>
<feature type="strand" evidence="4">
    <location>
        <begin position="84"/>
        <end position="91"/>
    </location>
</feature>
<feature type="strand" evidence="3">
    <location>
        <begin position="98"/>
        <end position="100"/>
    </location>
</feature>
<feature type="strand" evidence="4">
    <location>
        <begin position="103"/>
        <end position="108"/>
    </location>
</feature>
<feature type="strand" evidence="4">
    <location>
        <begin position="116"/>
        <end position="124"/>
    </location>
</feature>
<organism>
    <name type="scientific">Pyrococcus abyssi (strain GE5 / Orsay)</name>
    <dbReference type="NCBI Taxonomy" id="272844"/>
    <lineage>
        <taxon>Archaea</taxon>
        <taxon>Methanobacteriati</taxon>
        <taxon>Methanobacteriota</taxon>
        <taxon>Thermococci</taxon>
        <taxon>Thermococcales</taxon>
        <taxon>Thermococcaceae</taxon>
        <taxon>Pyrococcus</taxon>
    </lineage>
</organism>
<gene>
    <name evidence="1" type="primary">rps6e</name>
    <name type="ordered locus">PYRAB14340</name>
    <name type="ORF">PAB1427</name>
</gene>
<accession>Q9UYS3</accession>
<accession>G8ZIJ7</accession>
<protein>
    <recommendedName>
        <fullName evidence="1">Small ribosomal subunit protein eS6</fullName>
    </recommendedName>
    <alternativeName>
        <fullName evidence="2">30S ribosomal protein S6e</fullName>
    </alternativeName>
</protein>
<proteinExistence type="evidence at protein level"/>
<evidence type="ECO:0000255" key="1">
    <source>
        <dbReference type="HAMAP-Rule" id="MF_00512"/>
    </source>
</evidence>
<evidence type="ECO:0000305" key="2"/>
<evidence type="ECO:0007829" key="3">
    <source>
        <dbReference type="PDB" id="6SWD"/>
    </source>
</evidence>
<evidence type="ECO:0007829" key="4">
    <source>
        <dbReference type="PDB" id="7ZHG"/>
    </source>
</evidence>
<name>RS6E_PYRAB</name>
<sequence>MATFKLVISDPKTGIAKQIEITGPEAEKLIGKRIGDQIPVKELGINLNELFGKEFPEDVKMEIRGGTDKDGFPMRPDIHGPRRVRILLSKGPGFRPKEKGERRKKTVRGNTISPEIVQVNVKLVY</sequence>
<dbReference type="EMBL" id="AJ248287">
    <property type="protein sequence ID" value="CAB50339.1"/>
    <property type="molecule type" value="Genomic_DNA"/>
</dbReference>
<dbReference type="EMBL" id="HE613800">
    <property type="protein sequence ID" value="CCE70880.1"/>
    <property type="molecule type" value="Genomic_DNA"/>
</dbReference>
<dbReference type="PIR" id="F75055">
    <property type="entry name" value="F75055"/>
</dbReference>
<dbReference type="RefSeq" id="WP_010868549.1">
    <property type="nucleotide sequence ID" value="NC_000868.1"/>
</dbReference>
<dbReference type="PDB" id="6SW9">
    <property type="method" value="EM"/>
    <property type="resolution" value="4.20 A"/>
    <property type="chains" value="G=1-125"/>
</dbReference>
<dbReference type="PDB" id="6SWC">
    <property type="method" value="EM"/>
    <property type="resolution" value="3.30 A"/>
    <property type="chains" value="G=1-125"/>
</dbReference>
<dbReference type="PDB" id="6SWD">
    <property type="method" value="EM"/>
    <property type="resolution" value="3.20 A"/>
    <property type="chains" value="G=1-125"/>
</dbReference>
<dbReference type="PDB" id="7ZAG">
    <property type="method" value="EM"/>
    <property type="resolution" value="2.77 A"/>
    <property type="chains" value="G=1-125"/>
</dbReference>
<dbReference type="PDB" id="7ZAH">
    <property type="method" value="EM"/>
    <property type="resolution" value="2.70 A"/>
    <property type="chains" value="G=1-125"/>
</dbReference>
<dbReference type="PDB" id="7ZAI">
    <property type="method" value="EM"/>
    <property type="resolution" value="2.60 A"/>
    <property type="chains" value="G=1-125"/>
</dbReference>
<dbReference type="PDB" id="7ZHG">
    <property type="method" value="EM"/>
    <property type="resolution" value="2.25 A"/>
    <property type="chains" value="G=1-125"/>
</dbReference>
<dbReference type="PDBsum" id="6SW9"/>
<dbReference type="PDBsum" id="6SWC"/>
<dbReference type="PDBsum" id="6SWD"/>
<dbReference type="PDBsum" id="7ZAG"/>
<dbReference type="PDBsum" id="7ZAH"/>
<dbReference type="PDBsum" id="7ZAI"/>
<dbReference type="PDBsum" id="7ZHG"/>
<dbReference type="EMDB" id="EMD-10320"/>
<dbReference type="EMDB" id="EMD-10322"/>
<dbReference type="EMDB" id="EMD-10323"/>
<dbReference type="EMDB" id="EMD-14579"/>
<dbReference type="EMDB" id="EMD-14580"/>
<dbReference type="EMDB" id="EMD-14581"/>
<dbReference type="EMDB" id="EMD-14731"/>
<dbReference type="EMDB" id="EMD-8148"/>
<dbReference type="SMR" id="Q9UYS3"/>
<dbReference type="STRING" id="272844.PAB1427"/>
<dbReference type="KEGG" id="pab:PAB1427"/>
<dbReference type="PATRIC" id="fig|272844.11.peg.1525"/>
<dbReference type="eggNOG" id="arCOG01946">
    <property type="taxonomic scope" value="Archaea"/>
</dbReference>
<dbReference type="HOGENOM" id="CLU_109671_1_1_2"/>
<dbReference type="OrthoDB" id="7793at2157"/>
<dbReference type="PhylomeDB" id="Q9UYS3"/>
<dbReference type="Proteomes" id="UP000000810">
    <property type="component" value="Chromosome"/>
</dbReference>
<dbReference type="Proteomes" id="UP000009139">
    <property type="component" value="Chromosome"/>
</dbReference>
<dbReference type="GO" id="GO:1990904">
    <property type="term" value="C:ribonucleoprotein complex"/>
    <property type="evidence" value="ECO:0007669"/>
    <property type="project" value="UniProtKB-KW"/>
</dbReference>
<dbReference type="GO" id="GO:0005840">
    <property type="term" value="C:ribosome"/>
    <property type="evidence" value="ECO:0007669"/>
    <property type="project" value="UniProtKB-KW"/>
</dbReference>
<dbReference type="GO" id="GO:0003735">
    <property type="term" value="F:structural constituent of ribosome"/>
    <property type="evidence" value="ECO:0007669"/>
    <property type="project" value="InterPro"/>
</dbReference>
<dbReference type="GO" id="GO:0006412">
    <property type="term" value="P:translation"/>
    <property type="evidence" value="ECO:0007669"/>
    <property type="project" value="UniProtKB-UniRule"/>
</dbReference>
<dbReference type="HAMAP" id="MF_00512">
    <property type="entry name" value="Ribosomal_eS6"/>
    <property type="match status" value="1"/>
</dbReference>
<dbReference type="InterPro" id="IPR001377">
    <property type="entry name" value="Ribosomal_eS6"/>
</dbReference>
<dbReference type="InterPro" id="IPR020924">
    <property type="entry name" value="Ribosomal_eS6_arc"/>
</dbReference>
<dbReference type="InterPro" id="IPR018282">
    <property type="entry name" value="Ribosomal_eS6_CS"/>
</dbReference>
<dbReference type="NCBIfam" id="NF003293">
    <property type="entry name" value="PRK04290.1-2"/>
    <property type="match status" value="1"/>
</dbReference>
<dbReference type="NCBIfam" id="NF003294">
    <property type="entry name" value="PRK04290.1-3"/>
    <property type="match status" value="1"/>
</dbReference>
<dbReference type="PANTHER" id="PTHR11502">
    <property type="entry name" value="40S RIBOSOMAL PROTEIN S6"/>
    <property type="match status" value="1"/>
</dbReference>
<dbReference type="Pfam" id="PF01092">
    <property type="entry name" value="Ribosomal_S6e"/>
    <property type="match status" value="1"/>
</dbReference>
<dbReference type="SMART" id="SM01405">
    <property type="entry name" value="Ribosomal_S6e"/>
    <property type="match status" value="1"/>
</dbReference>
<dbReference type="PROSITE" id="PS00578">
    <property type="entry name" value="RIBOSOMAL_S6E"/>
    <property type="match status" value="1"/>
</dbReference>
<keyword id="KW-0002">3D-structure</keyword>
<keyword id="KW-0687">Ribonucleoprotein</keyword>
<keyword id="KW-0689">Ribosomal protein</keyword>